<name>HSPQ_SHISS</name>
<evidence type="ECO:0000255" key="1">
    <source>
        <dbReference type="HAMAP-Rule" id="MF_01194"/>
    </source>
</evidence>
<evidence type="ECO:0000256" key="2">
    <source>
        <dbReference type="SAM" id="MobiDB-lite"/>
    </source>
</evidence>
<evidence type="ECO:0000305" key="3"/>
<keyword id="KW-0963">Cytoplasm</keyword>
<keyword id="KW-1185">Reference proteome</keyword>
<keyword id="KW-0346">Stress response</keyword>
<gene>
    <name evidence="1" type="primary">hspQ</name>
    <name type="ordered locus">SSON_0971</name>
</gene>
<organism>
    <name type="scientific">Shigella sonnei (strain Ss046)</name>
    <dbReference type="NCBI Taxonomy" id="300269"/>
    <lineage>
        <taxon>Bacteria</taxon>
        <taxon>Pseudomonadati</taxon>
        <taxon>Pseudomonadota</taxon>
        <taxon>Gammaproteobacteria</taxon>
        <taxon>Enterobacterales</taxon>
        <taxon>Enterobacteriaceae</taxon>
        <taxon>Shigella</taxon>
    </lineage>
</organism>
<comment type="function">
    <text evidence="1">Involved in the degradation of certain denaturated proteins, including DnaA, during heat shock stress.</text>
</comment>
<comment type="subcellular location">
    <subcellularLocation>
        <location evidence="1">Cytoplasm</location>
    </subcellularLocation>
</comment>
<comment type="similarity">
    <text evidence="1">Belongs to the HspQ family.</text>
</comment>
<comment type="sequence caution" evidence="3">
    <conflict type="erroneous initiation">
        <sequence resource="EMBL-CDS" id="AAZ87708"/>
    </conflict>
</comment>
<feature type="chain" id="PRO_0000315316" description="Heat shock protein HspQ">
    <location>
        <begin position="1"/>
        <end position="105"/>
    </location>
</feature>
<feature type="region of interest" description="Disordered" evidence="2">
    <location>
        <begin position="75"/>
        <end position="105"/>
    </location>
</feature>
<accession>Q3Z3F4</accession>
<reference key="1">
    <citation type="journal article" date="2005" name="Nucleic Acids Res.">
        <title>Genome dynamics and diversity of Shigella species, the etiologic agents of bacillary dysentery.</title>
        <authorList>
            <person name="Yang F."/>
            <person name="Yang J."/>
            <person name="Zhang X."/>
            <person name="Chen L."/>
            <person name="Jiang Y."/>
            <person name="Yan Y."/>
            <person name="Tang X."/>
            <person name="Wang J."/>
            <person name="Xiong Z."/>
            <person name="Dong J."/>
            <person name="Xue Y."/>
            <person name="Zhu Y."/>
            <person name="Xu X."/>
            <person name="Sun L."/>
            <person name="Chen S."/>
            <person name="Nie H."/>
            <person name="Peng J."/>
            <person name="Xu J."/>
            <person name="Wang Y."/>
            <person name="Yuan Z."/>
            <person name="Wen Y."/>
            <person name="Yao Z."/>
            <person name="Shen Y."/>
            <person name="Qiang B."/>
            <person name="Hou Y."/>
            <person name="Yu J."/>
            <person name="Jin Q."/>
        </authorList>
    </citation>
    <scope>NUCLEOTIDE SEQUENCE [LARGE SCALE GENOMIC DNA]</scope>
    <source>
        <strain>Ss046</strain>
    </source>
</reference>
<sequence>MIASKFGIGQQVRHSLLGYLGVVVDIDPVYSLSEPSPDELAVNDELRAAPWYHVVMEDDNGLPVHTYLAEAQLSSELQDEHPEQPSMDELAQTIRKQLQAPRLRN</sequence>
<proteinExistence type="inferred from homology"/>
<dbReference type="EMBL" id="CP000038">
    <property type="protein sequence ID" value="AAZ87708.1"/>
    <property type="status" value="ALT_INIT"/>
    <property type="molecule type" value="Genomic_DNA"/>
</dbReference>
<dbReference type="RefSeq" id="WP_001295356.1">
    <property type="nucleotide sequence ID" value="NC_007384.1"/>
</dbReference>
<dbReference type="SMR" id="Q3Z3F4"/>
<dbReference type="GeneID" id="93776448"/>
<dbReference type="KEGG" id="ssn:SSON_0971"/>
<dbReference type="HOGENOM" id="CLU_123865_1_0_6"/>
<dbReference type="Proteomes" id="UP000002529">
    <property type="component" value="Chromosome"/>
</dbReference>
<dbReference type="GO" id="GO:0005737">
    <property type="term" value="C:cytoplasm"/>
    <property type="evidence" value="ECO:0007669"/>
    <property type="project" value="UniProtKB-SubCell"/>
</dbReference>
<dbReference type="GO" id="GO:0003677">
    <property type="term" value="F:DNA binding"/>
    <property type="evidence" value="ECO:0007669"/>
    <property type="project" value="InterPro"/>
</dbReference>
<dbReference type="GO" id="GO:0009408">
    <property type="term" value="P:response to heat"/>
    <property type="evidence" value="ECO:0007669"/>
    <property type="project" value="UniProtKB-UniRule"/>
</dbReference>
<dbReference type="Gene3D" id="2.30.30.390">
    <property type="entry name" value="Hemimethylated DNA-binding domain"/>
    <property type="match status" value="1"/>
</dbReference>
<dbReference type="HAMAP" id="MF_01194">
    <property type="entry name" value="HspQ"/>
    <property type="match status" value="1"/>
</dbReference>
<dbReference type="InterPro" id="IPR011722">
    <property type="entry name" value="Hemimethylated_DNA-bd_dom"/>
</dbReference>
<dbReference type="InterPro" id="IPR036623">
    <property type="entry name" value="Hemimethylated_DNA-bd_sf"/>
</dbReference>
<dbReference type="InterPro" id="IPR022866">
    <property type="entry name" value="HspQ"/>
</dbReference>
<dbReference type="NCBIfam" id="NF010729">
    <property type="entry name" value="PRK14129.1"/>
    <property type="match status" value="1"/>
</dbReference>
<dbReference type="NCBIfam" id="TIGR02097">
    <property type="entry name" value="yccV"/>
    <property type="match status" value="1"/>
</dbReference>
<dbReference type="Pfam" id="PF08755">
    <property type="entry name" value="YccV-like"/>
    <property type="match status" value="1"/>
</dbReference>
<dbReference type="SMART" id="SM00992">
    <property type="entry name" value="YccV-like"/>
    <property type="match status" value="1"/>
</dbReference>
<dbReference type="SUPFAM" id="SSF141255">
    <property type="entry name" value="YccV-like"/>
    <property type="match status" value="1"/>
</dbReference>
<protein>
    <recommendedName>
        <fullName evidence="1">Heat shock protein HspQ</fullName>
    </recommendedName>
</protein>